<comment type="function">
    <text evidence="2 4 5 9 12 13 14">Averufin oxidase A; part of the fragmented gene cluster that mediates the biosynthesis of dothistromin (DOTH), a polyketide toxin very similar in structure to the aflatoxin precursor, versicolorin B (PubMed:12039746, PubMed:17683963, PubMed:22069571, PubMed:23207690, PubMed:23448391). The first step of the pathway is the conversion of acetate to norsolorinic acid (NOR) and requires the fatty acid synthase subunits hexA and hexB, as well as the polyketide synthase pksA (PubMed:16649078, PubMed:23207690). PksA combines a hexanoyl starter unit and 7 malonyl-CoA extender units to synthesize the precursor NOR (By similarity). The hexanoyl starter unit is provided to the acyl-carrier protein (ACP) domain by the fungal fatty acid synthase hexA/hexB (By similarity). The second step is the conversion of NOR to averantin (AVN) and requires the norsolorinic acid ketoreductase nor1, which catalyzes the dehydration of norsolorinic acid to form (1'S)-averantin (PubMed:23207690). The cytochrome P450 monooxygenase avnA then catalyzes the hydroxylation of AVN to 5'hydroxyaverantin (HAVN) (PubMed:23207690). The next step is performed by adhA that transforms HAVN to averufin (AVF) (PubMed:23207690). Averufin might then be converted to hydroxyversicolorone by cypX and avfA (PubMed:23207690). Hydroxyversicolorone is further converted versiconal hemiacetal acetate (VHA) by moxY (PubMed:23207690). VHA is then the substrate for the versiconal hemiacetal acetate esterase est1 to yield versiconal (VAL) (PubMed:23207690). Versicolorin B synthase vbsA then converts VAL to versicolorin B (VERB) by closing the bisfuran ring (PubMed:16649078, PubMed:23207690). Then, the activity of the versicolorin B desaturase verB leads to versicolorin A (VERA) (PubMed:23207690). DotB, a predicted chloroperoxidase, may perform epoxidation of the A-ring of VERA (PubMed:23207690). Alternatively, a cytochrome P450, such as cypX or avnA could catalyze this step (PubMed:23207690). It is also possible that another, uncharacterized, cytochrome P450 enzyme is responsible for this step (PubMed:23207690). Opening of the epoxide could potentially be achieved by the epoxide hydrolase epoA (PubMed:23207690). However, epoA seems not to be required for DOTH biosynthesis, but other epoxide hydrolases may have the ability to complement this hydrolysis (PubMed:23207690). Alternatively, opening of the epoxide ring could be achieved non-enzymatically (PubMed:23207690). The next step is the deoxygenation of ring A to yield the 5,8-dihydroxyanthraquinone which is most likely catalyzed by the NADPH dehydrogenase encoded by ver1 (PubMed:23207690). The last stages of DOTH biosynthesis are proposed to involve hydroxylation of the bisfuran (PubMed:23207690). OrdB and norB might have oxidative roles here (PubMed:23207690). An alternative possibility is that cytochrome P450 monoogenases such as avnA and cypX might perform these steps in addition to previously proposed steps (PubMed:23207690).</text>
</comment>
<comment type="cofactor">
    <cofactor evidence="1">
        <name>FAD</name>
        <dbReference type="ChEBI" id="CHEBI:57692"/>
    </cofactor>
    <text evidence="1">Binds 1 FAD per subunit.</text>
</comment>
<comment type="pathway">
    <text evidence="9 13">Mycotoxin biosynthesis.</text>
</comment>
<comment type="induction">
    <text evidence="6 7">Expression is positively regulated by the dothistromin-specific transcription factor aflR (PubMed:23207690). Dothistromin biosynthetic proteins are co-regulated, showing a high level of expression at ealy exponential phase with a subsequent decline in older cultures (PubMed:17683963).</text>
</comment>
<comment type="similarity">
    <text evidence="11">Belongs to the FAD-binding monooxygenase family.</text>
</comment>
<feature type="chain" id="PRO_0000443474" description="FAD-binding monooxygenase moxY">
    <location>
        <begin position="1"/>
        <end position="626"/>
    </location>
</feature>
<feature type="region of interest" description="Disordered" evidence="3">
    <location>
        <begin position="1"/>
        <end position="47"/>
    </location>
</feature>
<feature type="compositionally biased region" description="Low complexity" evidence="3">
    <location>
        <begin position="1"/>
        <end position="23"/>
    </location>
</feature>
<feature type="compositionally biased region" description="Polar residues" evidence="3">
    <location>
        <begin position="31"/>
        <end position="47"/>
    </location>
</feature>
<feature type="binding site" evidence="1">
    <location>
        <begin position="96"/>
        <end position="99"/>
    </location>
    <ligand>
        <name>FAD</name>
        <dbReference type="ChEBI" id="CHEBI:57692"/>
    </ligand>
</feature>
<feature type="binding site" evidence="1">
    <location>
        <begin position="106"/>
        <end position="108"/>
    </location>
    <ligand>
        <name>NADP(+)</name>
        <dbReference type="ChEBI" id="CHEBI:58349"/>
    </ligand>
</feature>
<feature type="binding site" evidence="1">
    <location>
        <begin position="108"/>
        <end position="109"/>
    </location>
    <ligand>
        <name>FAD</name>
        <dbReference type="ChEBI" id="CHEBI:57692"/>
    </ligand>
</feature>
<feature type="binding site" evidence="1">
    <location>
        <position position="114"/>
    </location>
    <ligand>
        <name>FAD</name>
        <dbReference type="ChEBI" id="CHEBI:57692"/>
    </ligand>
</feature>
<feature type="binding site" evidence="1">
    <location>
        <begin position="243"/>
        <end position="249"/>
    </location>
    <ligand>
        <name>NADP(+)</name>
        <dbReference type="ChEBI" id="CHEBI:58349"/>
    </ligand>
</feature>
<feature type="binding site" evidence="1">
    <location>
        <begin position="266"/>
        <end position="267"/>
    </location>
    <ligand>
        <name>NADP(+)</name>
        <dbReference type="ChEBI" id="CHEBI:58349"/>
    </ligand>
</feature>
<feature type="site" description="Transition state stabilizer" evidence="1">
    <location>
        <position position="359"/>
    </location>
</feature>
<protein>
    <recommendedName>
        <fullName evidence="11">FAD-binding monooxygenase moxY</fullName>
        <ecNumber evidence="11">1.14.13.-</ecNumber>
    </recommendedName>
    <alternativeName>
        <fullName evidence="10">Dothistromin biosynthesis protein moxY</fullName>
    </alternativeName>
</protein>
<keyword id="KW-0274">FAD</keyword>
<keyword id="KW-0285">Flavoprotein</keyword>
<keyword id="KW-0503">Monooxygenase</keyword>
<keyword id="KW-0521">NADP</keyword>
<keyword id="KW-0560">Oxidoreductase</keyword>
<keyword id="KW-1185">Reference proteome</keyword>
<accession>M2Y0N8</accession>
<gene>
    <name evidence="10" type="primary">moxY</name>
    <name evidence="8" type="synonym">moxA</name>
    <name type="ORF">DOTSEDRAFT_75547</name>
</gene>
<proteinExistence type="evidence at transcript level"/>
<sequence>MAPFLSAHGESASSSSSSSPTPSRHTRNQHVDYSTPGSTGYNIPQNTTWNAPSNRKIRVLTIGAGISGILMAYQLQKHCENVEHVVYEKNEDVGGTWLENRYPRAGCDIPSHAYTYQFALNPDWPRFFSFAPDIWAYLNKVCETFDLKKYMRFHVEVVGCYWQEHAGEWVVKLREHLPNHEVREFEDRCNVLLYGAGVLNNFKFPDIPGLQDRFKGRVIHTARWPKDYKEEDWAKERVAVIGSGASSIQTVPGMQPYAKHLDIFVRTGVWFGVIAGNSGSQAKEYSEEERENFRRDPKAVVAHAREIEEQVNGMWGGFYAGSMGQKMGSGYFRTRMAEHIKDERLLQGFSPKFGLGCRRITPGDPYMEAIQKENVDVHFTPVESCTEKGVVGGDGVEREVDTVICATGFDVSYRPRFPVIGKDGVDLREKWDLCPESYLGLAIPDMPNFLTFIGPTWPIENGSVMAPLHSVSEYAIQLIKRMQNENIRSWVPRQDITDSFNDHVQEWIKHTVWKDDCRSWYKNNETGRVNAIWPGSSLHYQQVIERPRYEDFEIHSFNDNPWAHLGMGWTVQDRKGPKEEDVCPYFNVKNIDPKWYEACGGDSRLLVERPEESSQAGQQFLWPTGT</sequence>
<dbReference type="EC" id="1.14.13.-" evidence="11"/>
<dbReference type="EMBL" id="KB446546">
    <property type="protein sequence ID" value="EME38864.1"/>
    <property type="molecule type" value="Genomic_DNA"/>
</dbReference>
<dbReference type="SMR" id="M2Y0N8"/>
<dbReference type="STRING" id="675120.M2Y0N8"/>
<dbReference type="EnsemblFungi" id="EME38864">
    <property type="protein sequence ID" value="EME38864"/>
    <property type="gene ID" value="DOTSEDRAFT_75547"/>
</dbReference>
<dbReference type="eggNOG" id="KOG1399">
    <property type="taxonomic scope" value="Eukaryota"/>
</dbReference>
<dbReference type="HOGENOM" id="CLU_006937_6_0_1"/>
<dbReference type="OMA" id="MVFHTEV"/>
<dbReference type="OrthoDB" id="74360at2759"/>
<dbReference type="Proteomes" id="UP000016933">
    <property type="component" value="Unassembled WGS sequence"/>
</dbReference>
<dbReference type="GO" id="GO:0050660">
    <property type="term" value="F:flavin adenine dinucleotide binding"/>
    <property type="evidence" value="ECO:0007669"/>
    <property type="project" value="InterPro"/>
</dbReference>
<dbReference type="GO" id="GO:0004499">
    <property type="term" value="F:N,N-dimethylaniline monooxygenase activity"/>
    <property type="evidence" value="ECO:0007669"/>
    <property type="project" value="InterPro"/>
</dbReference>
<dbReference type="GO" id="GO:0050661">
    <property type="term" value="F:NADP binding"/>
    <property type="evidence" value="ECO:0007669"/>
    <property type="project" value="InterPro"/>
</dbReference>
<dbReference type="Gene3D" id="3.50.50.60">
    <property type="entry name" value="FAD/NAD(P)-binding domain"/>
    <property type="match status" value="2"/>
</dbReference>
<dbReference type="InterPro" id="IPR051209">
    <property type="entry name" value="FAD-bind_Monooxygenase_sf"/>
</dbReference>
<dbReference type="InterPro" id="IPR036188">
    <property type="entry name" value="FAD/NAD-bd_sf"/>
</dbReference>
<dbReference type="InterPro" id="IPR020946">
    <property type="entry name" value="Flavin_mOase-like"/>
</dbReference>
<dbReference type="PANTHER" id="PTHR42877:SF1">
    <property type="entry name" value="FAD-BINDING MONOOXYGENASE STCW"/>
    <property type="match status" value="1"/>
</dbReference>
<dbReference type="PANTHER" id="PTHR42877">
    <property type="entry name" value="L-ORNITHINE N(5)-MONOOXYGENASE-RELATED"/>
    <property type="match status" value="1"/>
</dbReference>
<dbReference type="Pfam" id="PF00743">
    <property type="entry name" value="FMO-like"/>
    <property type="match status" value="1"/>
</dbReference>
<dbReference type="SUPFAM" id="SSF51905">
    <property type="entry name" value="FAD/NAD(P)-binding domain"/>
    <property type="match status" value="1"/>
</dbReference>
<evidence type="ECO:0000250" key="1">
    <source>
        <dbReference type="UniProtKB" id="H3JQW0"/>
    </source>
</evidence>
<evidence type="ECO:0000250" key="2">
    <source>
        <dbReference type="UniProtKB" id="Q6UEF3"/>
    </source>
</evidence>
<evidence type="ECO:0000256" key="3">
    <source>
        <dbReference type="SAM" id="MobiDB-lite"/>
    </source>
</evidence>
<evidence type="ECO:0000269" key="4">
    <source>
    </source>
</evidence>
<evidence type="ECO:0000269" key="5">
    <source>
    </source>
</evidence>
<evidence type="ECO:0000269" key="6">
    <source>
    </source>
</evidence>
<evidence type="ECO:0000269" key="7">
    <source>
    </source>
</evidence>
<evidence type="ECO:0000303" key="8">
    <source>
    </source>
</evidence>
<evidence type="ECO:0000303" key="9">
    <source>
    </source>
</evidence>
<evidence type="ECO:0000303" key="10">
    <source>
    </source>
</evidence>
<evidence type="ECO:0000305" key="11"/>
<evidence type="ECO:0000305" key="12">
    <source>
    </source>
</evidence>
<evidence type="ECO:0000305" key="13">
    <source>
    </source>
</evidence>
<evidence type="ECO:0000305" key="14">
    <source>
    </source>
</evidence>
<name>MOXY_DOTSN</name>
<organism>
    <name type="scientific">Dothistroma septosporum (strain NZE10 / CBS 128990)</name>
    <name type="common">Red band needle blight fungus</name>
    <name type="synonym">Mycosphaerella pini</name>
    <dbReference type="NCBI Taxonomy" id="675120"/>
    <lineage>
        <taxon>Eukaryota</taxon>
        <taxon>Fungi</taxon>
        <taxon>Dikarya</taxon>
        <taxon>Ascomycota</taxon>
        <taxon>Pezizomycotina</taxon>
        <taxon>Dothideomycetes</taxon>
        <taxon>Dothideomycetidae</taxon>
        <taxon>Mycosphaerellales</taxon>
        <taxon>Mycosphaerellaceae</taxon>
        <taxon>Dothistroma</taxon>
    </lineage>
</organism>
<reference key="1">
    <citation type="journal article" date="2012" name="PLoS Genet.">
        <title>The genomes of the fungal plant pathogens Cladosporium fulvum and Dothistroma septosporum reveal adaptation to different hosts and lifestyles but also signatures of common ancestry.</title>
        <authorList>
            <person name="de Wit P.J.G.M."/>
            <person name="van der Burgt A."/>
            <person name="Oekmen B."/>
            <person name="Stergiopoulos I."/>
            <person name="Abd-Elsalam K.A."/>
            <person name="Aerts A.L."/>
            <person name="Bahkali A.H."/>
            <person name="Beenen H.G."/>
            <person name="Chettri P."/>
            <person name="Cox M.P."/>
            <person name="Datema E."/>
            <person name="de Vries R.P."/>
            <person name="Dhillon B."/>
            <person name="Ganley A.R."/>
            <person name="Griffiths S.A."/>
            <person name="Guo Y."/>
            <person name="Hamelin R.C."/>
            <person name="Henrissat B."/>
            <person name="Kabir M.S."/>
            <person name="Jashni M.K."/>
            <person name="Kema G."/>
            <person name="Klaubauf S."/>
            <person name="Lapidus A."/>
            <person name="Levasseur A."/>
            <person name="Lindquist E."/>
            <person name="Mehrabi R."/>
            <person name="Ohm R.A."/>
            <person name="Owen T.J."/>
            <person name="Salamov A."/>
            <person name="Schwelm A."/>
            <person name="Schijlen E."/>
            <person name="Sun H."/>
            <person name="van den Burg H.A."/>
            <person name="van Ham R.C.H.J."/>
            <person name="Zhang S."/>
            <person name="Goodwin S.B."/>
            <person name="Grigoriev I.V."/>
            <person name="Collemare J."/>
            <person name="Bradshaw R.E."/>
        </authorList>
    </citation>
    <scope>NUCLEOTIDE SEQUENCE [LARGE SCALE GENOMIC DNA]</scope>
    <source>
        <strain>NZE10 / CBS 128990</strain>
    </source>
</reference>
<reference key="2">
    <citation type="journal article" date="2012" name="PLoS Pathog.">
        <title>Diverse lifestyles and strategies of plant pathogenesis encoded in the genomes of eighteen Dothideomycetes fungi.</title>
        <authorList>
            <person name="Ohm R.A."/>
            <person name="Feau N."/>
            <person name="Henrissat B."/>
            <person name="Schoch C.L."/>
            <person name="Horwitz B.A."/>
            <person name="Barry K.W."/>
            <person name="Condon B.J."/>
            <person name="Copeland A.C."/>
            <person name="Dhillon B."/>
            <person name="Glaser F."/>
            <person name="Hesse C.N."/>
            <person name="Kosti I."/>
            <person name="LaButti K."/>
            <person name="Lindquist E.A."/>
            <person name="Lucas S."/>
            <person name="Salamov A.A."/>
            <person name="Bradshaw R.E."/>
            <person name="Ciuffetti L."/>
            <person name="Hamelin R.C."/>
            <person name="Kema G.H.J."/>
            <person name="Lawrence C."/>
            <person name="Scott J.A."/>
            <person name="Spatafora J.W."/>
            <person name="Turgeon B.G."/>
            <person name="de Wit P.J.G.M."/>
            <person name="Zhong S."/>
            <person name="Goodwin S.B."/>
            <person name="Grigoriev I.V."/>
        </authorList>
    </citation>
    <scope>NUCLEOTIDE SEQUENCE [LARGE SCALE GENOMIC DNA]</scope>
    <source>
        <strain>NZE10 / CBS 128990</strain>
    </source>
</reference>
<reference key="3">
    <citation type="journal article" date="2002" name="Appl. Environ. Microbiol.">
        <title>Dothistroma pini, a forest pathogen, contains homologs of aflatoxin biosynthetic pathway genes.</title>
        <authorList>
            <person name="Bradshaw R.E."/>
            <person name="Bhatnagar D."/>
            <person name="Ganley R.J."/>
            <person name="Gillman C.J."/>
            <person name="Monahan B.J."/>
            <person name="Seconi J.M."/>
        </authorList>
    </citation>
    <scope>FUNCTION</scope>
</reference>
<reference key="4">
    <citation type="journal article" date="2006" name="Mycopathologia">
        <title>A polyketide synthase gene required for biosynthesis of the aflatoxin-like toxin, dothistromin.</title>
        <authorList>
            <person name="Bradshaw R.E."/>
            <person name="Jin H."/>
            <person name="Morgan B.S."/>
            <person name="Schwelm A."/>
            <person name="Teddy O.R."/>
            <person name="Young C.A."/>
            <person name="Zhang S."/>
        </authorList>
    </citation>
    <scope>FUNCTION</scope>
</reference>
<reference key="5">
    <citation type="journal article" date="2007" name="Fungal Genet. Biol.">
        <title>A fragmented aflatoxin-like gene cluster in the forest pathogen Dothistroma septosporum.</title>
        <authorList>
            <person name="Zhang S."/>
            <person name="Schwelm A."/>
            <person name="Jin H."/>
            <person name="Collins L.J."/>
            <person name="Bradshaw R.E."/>
        </authorList>
    </citation>
    <scope>FUNCTION</scope>
    <scope>INDUCTION</scope>
</reference>
<reference key="6">
    <citation type="journal article" date="2010" name="Toxins">
        <title>Genetics of dothistromin biosynthesis of Dothistroma septosporum: an update.</title>
        <authorList>
            <person name="Schwelm A."/>
            <person name="Bradshaw R.E."/>
        </authorList>
    </citation>
    <scope>REVIEW ON FUNCTION</scope>
    <scope>PATHWAY</scope>
</reference>
<reference key="7">
    <citation type="journal article" date="2013" name="Fungal Genet. Biol.">
        <title>Dothistromin genes at multiple separate loci are regulated by AflR.</title>
        <authorList>
            <person name="Chettri P."/>
            <person name="Ehrlich K.C."/>
            <person name="Cary J.W."/>
            <person name="Collemare J."/>
            <person name="Cox M.P."/>
            <person name="Griffiths S.A."/>
            <person name="Olson M.A."/>
            <person name="de Wit P.J."/>
            <person name="Bradshaw R.E."/>
        </authorList>
    </citation>
    <scope>FUNCTION</scope>
    <scope>INDUCTION</scope>
    <scope>PATHWAY</scope>
</reference>
<reference key="8">
    <citation type="journal article" date="2013" name="New Phytol.">
        <title>Fragmentation of an aflatoxin-like gene cluster in a forest pathogen.</title>
        <authorList>
            <person name="Bradshaw R.E."/>
            <person name="Slot J.C."/>
            <person name="Moore G.G."/>
            <person name="Chettri P."/>
            <person name="de Wit P.J."/>
            <person name="Ehrlich K.C."/>
            <person name="Ganley A.R."/>
            <person name="Olson M.A."/>
            <person name="Rokas A."/>
            <person name="Carbone I."/>
            <person name="Cox M.P."/>
        </authorList>
    </citation>
    <scope>FUNCTION</scope>
</reference>